<dbReference type="EMBL" id="CP001037">
    <property type="protein sequence ID" value="ACC81031.1"/>
    <property type="molecule type" value="Genomic_DNA"/>
</dbReference>
<dbReference type="SMR" id="B2J9K4"/>
<dbReference type="STRING" id="63737.Npun_R2470"/>
<dbReference type="EnsemblBacteria" id="ACC81031">
    <property type="protein sequence ID" value="ACC81031"/>
    <property type="gene ID" value="Npun_R2470"/>
</dbReference>
<dbReference type="KEGG" id="npu:Npun_R2470"/>
<dbReference type="HOGENOM" id="CLU_217078_1_0_3"/>
<dbReference type="OrthoDB" id="427659at2"/>
<dbReference type="PhylomeDB" id="B2J9K4"/>
<dbReference type="Proteomes" id="UP000001191">
    <property type="component" value="Chromosome"/>
</dbReference>
<dbReference type="GO" id="GO:0009539">
    <property type="term" value="C:photosystem II reaction center"/>
    <property type="evidence" value="ECO:0007669"/>
    <property type="project" value="InterPro"/>
</dbReference>
<dbReference type="GO" id="GO:0031676">
    <property type="term" value="C:plasma membrane-derived thylakoid membrane"/>
    <property type="evidence" value="ECO:0007669"/>
    <property type="project" value="UniProtKB-SubCell"/>
</dbReference>
<dbReference type="GO" id="GO:0015979">
    <property type="term" value="P:photosynthesis"/>
    <property type="evidence" value="ECO:0007669"/>
    <property type="project" value="UniProtKB-UniRule"/>
</dbReference>
<dbReference type="HAMAP" id="MF_00808">
    <property type="entry name" value="PSII_PsbT"/>
    <property type="match status" value="1"/>
</dbReference>
<dbReference type="InterPro" id="IPR001743">
    <property type="entry name" value="PSII_PsbT"/>
</dbReference>
<dbReference type="InterPro" id="IPR037268">
    <property type="entry name" value="PSII_PsbT_sf"/>
</dbReference>
<dbReference type="NCBIfam" id="NF008825">
    <property type="entry name" value="PRK11875.1"/>
    <property type="match status" value="1"/>
</dbReference>
<dbReference type="PANTHER" id="PTHR36411">
    <property type="match status" value="1"/>
</dbReference>
<dbReference type="PANTHER" id="PTHR36411:SF2">
    <property type="entry name" value="PHOTOSYSTEM II REACTION CENTER PROTEIN T"/>
    <property type="match status" value="1"/>
</dbReference>
<dbReference type="Pfam" id="PF01405">
    <property type="entry name" value="PsbT"/>
    <property type="match status" value="1"/>
</dbReference>
<dbReference type="SUPFAM" id="SSF161029">
    <property type="entry name" value="Photosystem II reaction center protein T, PsbT"/>
    <property type="match status" value="1"/>
</dbReference>
<accession>B2J9K4</accession>
<reference key="1">
    <citation type="journal article" date="2013" name="Plant Physiol.">
        <title>A Nostoc punctiforme Sugar Transporter Necessary to Establish a Cyanobacterium-Plant Symbiosis.</title>
        <authorList>
            <person name="Ekman M."/>
            <person name="Picossi S."/>
            <person name="Campbell E.L."/>
            <person name="Meeks J.C."/>
            <person name="Flores E."/>
        </authorList>
    </citation>
    <scope>NUCLEOTIDE SEQUENCE [LARGE SCALE GENOMIC DNA]</scope>
    <source>
        <strain>ATCC 29133 / PCC 73102</strain>
    </source>
</reference>
<evidence type="ECO:0000255" key="1">
    <source>
        <dbReference type="HAMAP-Rule" id="MF_00808"/>
    </source>
</evidence>
<proteinExistence type="inferred from homology"/>
<feature type="chain" id="PRO_1000134017" description="Photosystem II reaction center protein T">
    <location>
        <begin position="1"/>
        <end position="35"/>
    </location>
</feature>
<feature type="transmembrane region" description="Helical" evidence="1">
    <location>
        <begin position="3"/>
        <end position="23"/>
    </location>
</feature>
<organism>
    <name type="scientific">Nostoc punctiforme (strain ATCC 29133 / PCC 73102)</name>
    <dbReference type="NCBI Taxonomy" id="63737"/>
    <lineage>
        <taxon>Bacteria</taxon>
        <taxon>Bacillati</taxon>
        <taxon>Cyanobacteriota</taxon>
        <taxon>Cyanophyceae</taxon>
        <taxon>Nostocales</taxon>
        <taxon>Nostocaceae</taxon>
        <taxon>Nostoc</taxon>
    </lineage>
</organism>
<comment type="function">
    <text evidence="1">Found at the monomer-monomer interface of the photosystem II (PS II) dimer, plays a role in assembly and dimerization of PSII. PSII is a light-driven water plastoquinone oxidoreductase, using light energy to abstract electrons from H(2)O, generating a proton gradient subsequently used for ATP formation.</text>
</comment>
<comment type="subunit">
    <text evidence="1">PSII is composed of 1 copy each of membrane proteins PsbA, PsbB, PsbC, PsbD, PsbE, PsbF, PsbH, PsbI, PsbJ, PsbK, PsbL, PsbM, PsbT, PsbX, PsbY, PsbZ, Psb30/Ycf12, peripheral proteins PsbO, CyanoQ (PsbQ), PsbU, PsbV and a large number of cofactors. It forms dimeric complexes.</text>
</comment>
<comment type="subcellular location">
    <subcellularLocation>
        <location evidence="1">Cellular thylakoid membrane</location>
        <topology evidence="1">Single-pass membrane protein</topology>
    </subcellularLocation>
</comment>
<comment type="similarity">
    <text evidence="1">Belongs to the PsbT family.</text>
</comment>
<gene>
    <name evidence="1" type="primary">psbT</name>
    <name type="ordered locus">Npun_R2470</name>
</gene>
<sequence>MESVAYILIFTLCIGTIFFAIAFREPPRFEKPKDK</sequence>
<keyword id="KW-0472">Membrane</keyword>
<keyword id="KW-0602">Photosynthesis</keyword>
<keyword id="KW-0604">Photosystem II</keyword>
<keyword id="KW-1185">Reference proteome</keyword>
<keyword id="KW-0793">Thylakoid</keyword>
<keyword id="KW-0812">Transmembrane</keyword>
<keyword id="KW-1133">Transmembrane helix</keyword>
<protein>
    <recommendedName>
        <fullName evidence="1">Photosystem II reaction center protein T</fullName>
        <shortName evidence="1">PSII-T</shortName>
    </recommendedName>
</protein>
<name>PSBT_NOSP7</name>